<proteinExistence type="evidence at transcript level"/>
<sequence length="667" mass="76165">MAEVPEDYDSGPDEDGEPESERPELHKSYENAERDTMAEADSKLPAEIYHEPQPETEEEDFREGEPKSAKNVQLKPGGTALEGIAKESKRDVPSETEPGIPQEVKSEREMGEFFKDLEAPMDETHESDLEPPEEAKLNVTEDVFLESAMETDPVPPTETMSEVSGATVRERNLELLEEGTELGVPEESLRVQHEETGVEPPEQTQLDFPSEKPGESLEETDLQPPKMTKPDIPEETQRESTEKKRTEPPEQARPEFPEKEPRKSSEEAGLEPPEETQPEVPGEMQRKATEEKGTELPERTKPDLPDHKSRKSTDENVPEPLEEIKLEFPEEESRKPNEETILEQSEMMKPESPEEIRKSNEEKNPQPPEETGLVLPQEINPRVEEKTQTKPTEEKNLELPDETKPRETHVEFPKEDRPEPIKSKYSVGKNELEFREPKKGKWSLSDEFKKEYYALGSIRESEESIGTHYEFSQPLQKSFDVSEVCSYLDPSESLTELNEFVHEKEVVDLSQDLKELVSEDDETQSKQGTELQFEHLNWDPEKVAEWISQLGFPQYKGCFITNFISGRKLIHVNCSNLPQMGITNFEDMKAISRHTRELLEIEEPLFKRSISLPHRDIIGLYLEQKGHTGIKSDALTLSEFVKAAGLQDYAPEITAPEENEELPCTEP</sequence>
<keyword id="KW-0025">Alternative splicing</keyword>
<keyword id="KW-1185">Reference proteome</keyword>
<dbReference type="EMBL" id="AB070042">
    <property type="protein sequence ID" value="BAB62987.1"/>
    <property type="molecule type" value="mRNA"/>
</dbReference>
<dbReference type="EMBL" id="AB070164">
    <property type="protein sequence ID" value="BAB63109.1"/>
    <property type="molecule type" value="mRNA"/>
</dbReference>
<dbReference type="RefSeq" id="NP_001306514.1">
    <property type="nucleotide sequence ID" value="NM_001319585.1"/>
</dbReference>
<dbReference type="SMR" id="Q95JY5"/>
<dbReference type="STRING" id="9541.ENSMFAP00000037212"/>
<dbReference type="eggNOG" id="ENOG502S3Z4">
    <property type="taxonomic scope" value="Eukaryota"/>
</dbReference>
<dbReference type="Proteomes" id="UP000233100">
    <property type="component" value="Unplaced"/>
</dbReference>
<dbReference type="CDD" id="cd09530">
    <property type="entry name" value="SAM_Samd14"/>
    <property type="match status" value="1"/>
</dbReference>
<dbReference type="Gene3D" id="1.10.150.50">
    <property type="entry name" value="Transcription Factor, Ets-1"/>
    <property type="match status" value="1"/>
</dbReference>
<dbReference type="InterPro" id="IPR001660">
    <property type="entry name" value="SAM"/>
</dbReference>
<dbReference type="InterPro" id="IPR013761">
    <property type="entry name" value="SAM/pointed_sf"/>
</dbReference>
<dbReference type="PANTHER" id="PTHR46829">
    <property type="entry name" value="STERILE ALPHA MOTIF DOMAIN-CONTAINING PROTEIN 15"/>
    <property type="match status" value="1"/>
</dbReference>
<dbReference type="PANTHER" id="PTHR46829:SF1">
    <property type="entry name" value="STERILE ALPHA MOTIF DOMAIN-CONTAINING PROTEIN 15"/>
    <property type="match status" value="1"/>
</dbReference>
<dbReference type="Pfam" id="PF00536">
    <property type="entry name" value="SAM_1"/>
    <property type="match status" value="1"/>
</dbReference>
<dbReference type="SMART" id="SM00454">
    <property type="entry name" value="SAM"/>
    <property type="match status" value="1"/>
</dbReference>
<dbReference type="SUPFAM" id="SSF47769">
    <property type="entry name" value="SAM/Pointed domain"/>
    <property type="match status" value="1"/>
</dbReference>
<dbReference type="PROSITE" id="PS50105">
    <property type="entry name" value="SAM_DOMAIN"/>
    <property type="match status" value="1"/>
</dbReference>
<gene>
    <name type="primary">SAMD15</name>
    <name type="ORF">QtsA-12354</name>
    <name type="ORF">QtsA-15642</name>
</gene>
<name>SAM15_MACFA</name>
<organism>
    <name type="scientific">Macaca fascicularis</name>
    <name type="common">Crab-eating macaque</name>
    <name type="synonym">Cynomolgus monkey</name>
    <dbReference type="NCBI Taxonomy" id="9541"/>
    <lineage>
        <taxon>Eukaryota</taxon>
        <taxon>Metazoa</taxon>
        <taxon>Chordata</taxon>
        <taxon>Craniata</taxon>
        <taxon>Vertebrata</taxon>
        <taxon>Euteleostomi</taxon>
        <taxon>Mammalia</taxon>
        <taxon>Eutheria</taxon>
        <taxon>Euarchontoglires</taxon>
        <taxon>Primates</taxon>
        <taxon>Haplorrhini</taxon>
        <taxon>Catarrhini</taxon>
        <taxon>Cercopithecidae</taxon>
        <taxon>Cercopithecinae</taxon>
        <taxon>Macaca</taxon>
    </lineage>
</organism>
<accession>Q95JY5</accession>
<accession>Q95JL7</accession>
<evidence type="ECO:0000255" key="1">
    <source>
        <dbReference type="PROSITE-ProRule" id="PRU00184"/>
    </source>
</evidence>
<evidence type="ECO:0000256" key="2">
    <source>
        <dbReference type="SAM" id="MobiDB-lite"/>
    </source>
</evidence>
<evidence type="ECO:0000303" key="3">
    <source>
    </source>
</evidence>
<evidence type="ECO:0000305" key="4"/>
<protein>
    <recommendedName>
        <fullName>Sterile alpha motif domain-containing protein 15</fullName>
        <shortName>SAM domain-containing protein 15</shortName>
    </recommendedName>
</protein>
<comment type="alternative products">
    <event type="alternative splicing"/>
    <isoform>
        <id>Q95JY5-1</id>
        <name>1</name>
        <sequence type="displayed"/>
    </isoform>
    <isoform>
        <id>Q95JY5-2</id>
        <name>2</name>
        <sequence type="described" ref="VSP_023433"/>
    </isoform>
    <isoform>
        <id>Q95JY5-3</id>
        <name>3</name>
        <sequence type="described" ref="VSP_023434"/>
    </isoform>
</comment>
<reference key="1">
    <citation type="journal article" date="2002" name="BMC Genomics">
        <title>Cynomolgus monkey testicular cDNAs for discovery of novel human genes in the human genome sequence.</title>
        <authorList>
            <person name="Osada N."/>
            <person name="Hida M."/>
            <person name="Kusuda J."/>
            <person name="Tanuma R."/>
            <person name="Hirata M."/>
            <person name="Suto Y."/>
            <person name="Hirai M."/>
            <person name="Terao K."/>
            <person name="Sugano S."/>
            <person name="Hashimoto K."/>
        </authorList>
    </citation>
    <scope>NUCLEOTIDE SEQUENCE [LARGE SCALE MRNA] (ISOFORMS 2 AND 3)</scope>
    <source>
        <tissue>Testis</tissue>
    </source>
</reference>
<feature type="chain" id="PRO_0000279428" description="Sterile alpha motif domain-containing protein 15">
    <location>
        <begin position="1"/>
        <end position="667"/>
    </location>
</feature>
<feature type="domain" description="SAM" evidence="1">
    <location>
        <begin position="538"/>
        <end position="601"/>
    </location>
</feature>
<feature type="region of interest" description="Disordered" evidence="2">
    <location>
        <begin position="1"/>
        <end position="108"/>
    </location>
</feature>
<feature type="region of interest" description="Disordered" evidence="2">
    <location>
        <begin position="147"/>
        <end position="424"/>
    </location>
</feature>
<feature type="compositionally biased region" description="Acidic residues" evidence="2">
    <location>
        <begin position="1"/>
        <end position="18"/>
    </location>
</feature>
<feature type="compositionally biased region" description="Basic and acidic residues" evidence="2">
    <location>
        <begin position="19"/>
        <end position="53"/>
    </location>
</feature>
<feature type="compositionally biased region" description="Basic and acidic residues" evidence="2">
    <location>
        <begin position="84"/>
        <end position="93"/>
    </location>
</feature>
<feature type="compositionally biased region" description="Basic and acidic residues" evidence="2">
    <location>
        <begin position="187"/>
        <end position="196"/>
    </location>
</feature>
<feature type="compositionally biased region" description="Basic and acidic residues" evidence="2">
    <location>
        <begin position="228"/>
        <end position="266"/>
    </location>
</feature>
<feature type="compositionally biased region" description="Acidic residues" evidence="2">
    <location>
        <begin position="268"/>
        <end position="277"/>
    </location>
</feature>
<feature type="compositionally biased region" description="Basic and acidic residues" evidence="2">
    <location>
        <begin position="284"/>
        <end position="314"/>
    </location>
</feature>
<feature type="compositionally biased region" description="Basic and acidic residues" evidence="2">
    <location>
        <begin position="322"/>
        <end position="338"/>
    </location>
</feature>
<feature type="compositionally biased region" description="Basic and acidic residues" evidence="2">
    <location>
        <begin position="346"/>
        <end position="364"/>
    </location>
</feature>
<feature type="compositionally biased region" description="Basic and acidic residues" evidence="2">
    <location>
        <begin position="381"/>
        <end position="422"/>
    </location>
</feature>
<feature type="splice variant" id="VSP_023433" description="In isoform 2." evidence="3">
    <location>
        <begin position="129"/>
        <end position="172"/>
    </location>
</feature>
<feature type="splice variant" id="VSP_023434" description="In isoform 3." evidence="3">
    <original>AISRHTRELLEIEEPLFKRSISLPHRDIIGLYLEQKGHTGIKSDALTLSEFVKAAGLQDYAPEITAPEENEELPCTEP</original>
    <variation>TEVMDLGETSHRGDEPLPSHHIRKQFLDIRGSSWKLKNHYSNAPSAFPIGILLACI</variation>
    <location>
        <begin position="590"/>
        <end position="667"/>
    </location>
</feature>
<feature type="sequence conflict" description="In Ref. 1; BAB62987." evidence="4" ref="1">
    <original>R</original>
    <variation>G</variation>
    <location>
        <position position="22"/>
    </location>
</feature>
<feature type="sequence conflict" description="In Ref. 1; BAB62987." evidence="4" ref="1">
    <original>E</original>
    <variation>G</variation>
    <location>
        <position position="51"/>
    </location>
</feature>
<feature type="sequence conflict" description="In Ref. 1; BAB62987." evidence="4" ref="1">
    <original>R</original>
    <variation>Q</variation>
    <location>
        <position position="382"/>
    </location>
</feature>
<feature type="sequence conflict" description="In Ref. 1; BAB62987." evidence="4" ref="1">
    <original>V</original>
    <variation>A</variation>
    <location>
        <position position="506"/>
    </location>
</feature>
<feature type="sequence conflict" description="In Ref. 1; BAB62987." evidence="4" ref="1">
    <original>G</original>
    <variation>E</variation>
    <location>
        <position position="557"/>
    </location>
</feature>